<comment type="function">
    <text evidence="1">One of the primary rRNA binding proteins, it binds directly to 16S rRNA where it nucleates assembly of the head domain of the 30S subunit. Is located at the subunit interface close to the decoding center, probably blocks exit of the E-site tRNA.</text>
</comment>
<comment type="subunit">
    <text evidence="1">Part of the 30S ribosomal subunit. Contacts proteins S9 and S11.</text>
</comment>
<comment type="similarity">
    <text evidence="1">Belongs to the universal ribosomal protein uS7 family.</text>
</comment>
<gene>
    <name evidence="1" type="primary">rpsG</name>
    <name evidence="1" type="synonym">rps7</name>
    <name type="ordered locus">MSC_0158</name>
</gene>
<name>RS7_MYCMS</name>
<proteinExistence type="inferred from homology"/>
<keyword id="KW-1185">Reference proteome</keyword>
<keyword id="KW-0687">Ribonucleoprotein</keyword>
<keyword id="KW-0689">Ribosomal protein</keyword>
<keyword id="KW-0694">RNA-binding</keyword>
<keyword id="KW-0699">rRNA-binding</keyword>
<keyword id="KW-0820">tRNA-binding</keyword>
<protein>
    <recommendedName>
        <fullName evidence="1">Small ribosomal subunit protein uS7</fullName>
    </recommendedName>
    <alternativeName>
        <fullName evidence="2">30S ribosomal protein S7</fullName>
    </alternativeName>
</protein>
<reference key="1">
    <citation type="journal article" date="2002" name="Vet. Microbiol.">
        <title>Genetic and antigenic characterisation of elongation factor Tu from Mycoplasma mycoides subsp. mycoides SC.</title>
        <authorList>
            <person name="Martin-Alonso J.M."/>
            <person name="Prieto M."/>
            <person name="Parra F."/>
        </authorList>
    </citation>
    <scope>NUCLEOTIDE SEQUENCE [GENOMIC DNA]</scope>
</reference>
<reference key="2">
    <citation type="journal article" date="2004" name="Genome Res.">
        <title>The genome sequence of Mycoplasma mycoides subsp. mycoides SC type strain PG1T, the causative agent of contagious bovine pleuropneumonia (CBPP).</title>
        <authorList>
            <person name="Westberg J."/>
            <person name="Persson A."/>
            <person name="Holmberg A."/>
            <person name="Goesmann A."/>
            <person name="Lundeberg J."/>
            <person name="Johansson K.-E."/>
            <person name="Pettersson B."/>
            <person name="Uhlen M."/>
        </authorList>
    </citation>
    <scope>NUCLEOTIDE SEQUENCE [LARGE SCALE GENOMIC DNA]</scope>
    <source>
        <strain>CCUG 32753 / NCTC 10114 / PG1</strain>
    </source>
</reference>
<dbReference type="EMBL" id="AJ345083">
    <property type="protein sequence ID" value="CAC87986.1"/>
    <property type="molecule type" value="Genomic_DNA"/>
</dbReference>
<dbReference type="EMBL" id="AJ419601">
    <property type="protein sequence ID" value="CAD21852.1"/>
    <property type="molecule type" value="Genomic_DNA"/>
</dbReference>
<dbReference type="EMBL" id="BX293980">
    <property type="protein sequence ID" value="CAE76803.1"/>
    <property type="molecule type" value="Genomic_DNA"/>
</dbReference>
<dbReference type="RefSeq" id="NP_975161.1">
    <property type="nucleotide sequence ID" value="NC_005364.2"/>
</dbReference>
<dbReference type="RefSeq" id="WP_011166360.1">
    <property type="nucleotide sequence ID" value="NC_005364.2"/>
</dbReference>
<dbReference type="SMR" id="Q8VMU1"/>
<dbReference type="STRING" id="272632.MSC_0158"/>
<dbReference type="KEGG" id="mmy:MSC_0158"/>
<dbReference type="PATRIC" id="fig|272632.4.peg.167"/>
<dbReference type="eggNOG" id="COG0049">
    <property type="taxonomic scope" value="Bacteria"/>
</dbReference>
<dbReference type="HOGENOM" id="CLU_072226_1_1_14"/>
<dbReference type="Proteomes" id="UP000001016">
    <property type="component" value="Chromosome"/>
</dbReference>
<dbReference type="GO" id="GO:0015935">
    <property type="term" value="C:small ribosomal subunit"/>
    <property type="evidence" value="ECO:0007669"/>
    <property type="project" value="InterPro"/>
</dbReference>
<dbReference type="GO" id="GO:0019843">
    <property type="term" value="F:rRNA binding"/>
    <property type="evidence" value="ECO:0007669"/>
    <property type="project" value="UniProtKB-UniRule"/>
</dbReference>
<dbReference type="GO" id="GO:0003735">
    <property type="term" value="F:structural constituent of ribosome"/>
    <property type="evidence" value="ECO:0007669"/>
    <property type="project" value="InterPro"/>
</dbReference>
<dbReference type="GO" id="GO:0000049">
    <property type="term" value="F:tRNA binding"/>
    <property type="evidence" value="ECO:0007669"/>
    <property type="project" value="UniProtKB-UniRule"/>
</dbReference>
<dbReference type="GO" id="GO:0006412">
    <property type="term" value="P:translation"/>
    <property type="evidence" value="ECO:0007669"/>
    <property type="project" value="UniProtKB-UniRule"/>
</dbReference>
<dbReference type="CDD" id="cd14869">
    <property type="entry name" value="uS7_Bacteria"/>
    <property type="match status" value="1"/>
</dbReference>
<dbReference type="FunFam" id="1.10.455.10:FF:000001">
    <property type="entry name" value="30S ribosomal protein S7"/>
    <property type="match status" value="1"/>
</dbReference>
<dbReference type="Gene3D" id="1.10.455.10">
    <property type="entry name" value="Ribosomal protein S7 domain"/>
    <property type="match status" value="1"/>
</dbReference>
<dbReference type="HAMAP" id="MF_00480_B">
    <property type="entry name" value="Ribosomal_uS7_B"/>
    <property type="match status" value="1"/>
</dbReference>
<dbReference type="InterPro" id="IPR000235">
    <property type="entry name" value="Ribosomal_uS7"/>
</dbReference>
<dbReference type="InterPro" id="IPR005717">
    <property type="entry name" value="Ribosomal_uS7_bac/org-type"/>
</dbReference>
<dbReference type="InterPro" id="IPR020606">
    <property type="entry name" value="Ribosomal_uS7_CS"/>
</dbReference>
<dbReference type="InterPro" id="IPR023798">
    <property type="entry name" value="Ribosomal_uS7_dom"/>
</dbReference>
<dbReference type="InterPro" id="IPR036823">
    <property type="entry name" value="Ribosomal_uS7_dom_sf"/>
</dbReference>
<dbReference type="NCBIfam" id="TIGR01029">
    <property type="entry name" value="rpsG_bact"/>
    <property type="match status" value="1"/>
</dbReference>
<dbReference type="PANTHER" id="PTHR11205">
    <property type="entry name" value="RIBOSOMAL PROTEIN S7"/>
    <property type="match status" value="1"/>
</dbReference>
<dbReference type="Pfam" id="PF00177">
    <property type="entry name" value="Ribosomal_S7"/>
    <property type="match status" value="1"/>
</dbReference>
<dbReference type="PIRSF" id="PIRSF002122">
    <property type="entry name" value="RPS7p_RPS7a_RPS5e_RPS7o"/>
    <property type="match status" value="1"/>
</dbReference>
<dbReference type="SUPFAM" id="SSF47973">
    <property type="entry name" value="Ribosomal protein S7"/>
    <property type="match status" value="1"/>
</dbReference>
<dbReference type="PROSITE" id="PS00052">
    <property type="entry name" value="RIBOSOMAL_S7"/>
    <property type="match status" value="1"/>
</dbReference>
<organism>
    <name type="scientific">Mycoplasma mycoides subsp. mycoides SC (strain CCUG 32753 / NCTC 10114 / PG1)</name>
    <dbReference type="NCBI Taxonomy" id="272632"/>
    <lineage>
        <taxon>Bacteria</taxon>
        <taxon>Bacillati</taxon>
        <taxon>Mycoplasmatota</taxon>
        <taxon>Mollicutes</taxon>
        <taxon>Mycoplasmataceae</taxon>
        <taxon>Mycoplasma</taxon>
    </lineage>
</organism>
<evidence type="ECO:0000255" key="1">
    <source>
        <dbReference type="HAMAP-Rule" id="MF_00480"/>
    </source>
</evidence>
<evidence type="ECO:0000305" key="2"/>
<feature type="chain" id="PRO_0000124300" description="Small ribosomal subunit protein uS7">
    <location>
        <begin position="1"/>
        <end position="155"/>
    </location>
</feature>
<sequence>MRKNRAEKRDVLADPIYNSKLVTRAINKIMLDGKRGIAQSIIYDAFNIIKEKTNKEPIEVFNKAIENIKPHLELKVRRIGGANYQVPIEVSAERQITLALRWLINYARLRNEKVMTIKLANEIIDASNNIGGSVKKREDTHKMAEANKAFAHYRW</sequence>
<accession>Q8VMU1</accession>